<proteinExistence type="inferred from homology"/>
<gene>
    <name evidence="1" type="primary">rpmJ</name>
    <name type="ordered locus">MXAN_3322</name>
</gene>
<protein>
    <recommendedName>
        <fullName evidence="1">Large ribosomal subunit protein bL36</fullName>
    </recommendedName>
    <alternativeName>
        <fullName evidence="2">50S ribosomal protein L36</fullName>
    </alternativeName>
</protein>
<keyword id="KW-1185">Reference proteome</keyword>
<keyword id="KW-0687">Ribonucleoprotein</keyword>
<keyword id="KW-0689">Ribosomal protein</keyword>
<evidence type="ECO:0000255" key="1">
    <source>
        <dbReference type="HAMAP-Rule" id="MF_00251"/>
    </source>
</evidence>
<evidence type="ECO:0000305" key="2"/>
<reference key="1">
    <citation type="journal article" date="2006" name="Proc. Natl. Acad. Sci. U.S.A.">
        <title>Evolution of sensory complexity recorded in a myxobacterial genome.</title>
        <authorList>
            <person name="Goldman B.S."/>
            <person name="Nierman W.C."/>
            <person name="Kaiser D."/>
            <person name="Slater S.C."/>
            <person name="Durkin A.S."/>
            <person name="Eisen J.A."/>
            <person name="Ronning C.M."/>
            <person name="Barbazuk W.B."/>
            <person name="Blanchard M."/>
            <person name="Field C."/>
            <person name="Halling C."/>
            <person name="Hinkle G."/>
            <person name="Iartchuk O."/>
            <person name="Kim H.S."/>
            <person name="Mackenzie C."/>
            <person name="Madupu R."/>
            <person name="Miller N."/>
            <person name="Shvartsbeyn A."/>
            <person name="Sullivan S.A."/>
            <person name="Vaudin M."/>
            <person name="Wiegand R."/>
            <person name="Kaplan H.B."/>
        </authorList>
    </citation>
    <scope>NUCLEOTIDE SEQUENCE [LARGE SCALE GENOMIC DNA]</scope>
    <source>
        <strain>DK1622</strain>
    </source>
</reference>
<feature type="chain" id="PRO_0000302251" description="Large ribosomal subunit protein bL36">
    <location>
        <begin position="1"/>
        <end position="38"/>
    </location>
</feature>
<comment type="similarity">
    <text evidence="1">Belongs to the bacterial ribosomal protein bL36 family.</text>
</comment>
<name>RL36_MYXXD</name>
<organism>
    <name type="scientific">Myxococcus xanthus (strain DK1622)</name>
    <dbReference type="NCBI Taxonomy" id="246197"/>
    <lineage>
        <taxon>Bacteria</taxon>
        <taxon>Pseudomonadati</taxon>
        <taxon>Myxococcota</taxon>
        <taxon>Myxococcia</taxon>
        <taxon>Myxococcales</taxon>
        <taxon>Cystobacterineae</taxon>
        <taxon>Myxococcaceae</taxon>
        <taxon>Myxococcus</taxon>
    </lineage>
</organism>
<sequence length="38" mass="4405">MKVRASVKKICDKCKIVRRKGIVRIICASNPRHKQRQG</sequence>
<dbReference type="EMBL" id="CP000113">
    <property type="protein sequence ID" value="ABF89622.1"/>
    <property type="molecule type" value="Genomic_DNA"/>
</dbReference>
<dbReference type="RefSeq" id="WP_011553357.1">
    <property type="nucleotide sequence ID" value="NC_008095.1"/>
</dbReference>
<dbReference type="SMR" id="Q1D752"/>
<dbReference type="STRING" id="246197.MXAN_3322"/>
<dbReference type="EnsemblBacteria" id="ABF89622">
    <property type="protein sequence ID" value="ABF89622"/>
    <property type="gene ID" value="MXAN_3322"/>
</dbReference>
<dbReference type="GeneID" id="41360675"/>
<dbReference type="KEGG" id="mxa:MXAN_3322"/>
<dbReference type="eggNOG" id="COG0257">
    <property type="taxonomic scope" value="Bacteria"/>
</dbReference>
<dbReference type="HOGENOM" id="CLU_135723_6_2_7"/>
<dbReference type="Proteomes" id="UP000002402">
    <property type="component" value="Chromosome"/>
</dbReference>
<dbReference type="GO" id="GO:0005737">
    <property type="term" value="C:cytoplasm"/>
    <property type="evidence" value="ECO:0007669"/>
    <property type="project" value="UniProtKB-ARBA"/>
</dbReference>
<dbReference type="GO" id="GO:1990904">
    <property type="term" value="C:ribonucleoprotein complex"/>
    <property type="evidence" value="ECO:0007669"/>
    <property type="project" value="UniProtKB-KW"/>
</dbReference>
<dbReference type="GO" id="GO:0005840">
    <property type="term" value="C:ribosome"/>
    <property type="evidence" value="ECO:0007669"/>
    <property type="project" value="UniProtKB-KW"/>
</dbReference>
<dbReference type="GO" id="GO:0003735">
    <property type="term" value="F:structural constituent of ribosome"/>
    <property type="evidence" value="ECO:0007669"/>
    <property type="project" value="InterPro"/>
</dbReference>
<dbReference type="GO" id="GO:0006412">
    <property type="term" value="P:translation"/>
    <property type="evidence" value="ECO:0007669"/>
    <property type="project" value="UniProtKB-UniRule"/>
</dbReference>
<dbReference type="HAMAP" id="MF_00251">
    <property type="entry name" value="Ribosomal_bL36"/>
    <property type="match status" value="1"/>
</dbReference>
<dbReference type="InterPro" id="IPR000473">
    <property type="entry name" value="Ribosomal_bL36"/>
</dbReference>
<dbReference type="InterPro" id="IPR035977">
    <property type="entry name" value="Ribosomal_bL36_sp"/>
</dbReference>
<dbReference type="NCBIfam" id="TIGR01022">
    <property type="entry name" value="rpmJ_bact"/>
    <property type="match status" value="1"/>
</dbReference>
<dbReference type="PANTHER" id="PTHR42888">
    <property type="entry name" value="50S RIBOSOMAL PROTEIN L36, CHLOROPLASTIC"/>
    <property type="match status" value="1"/>
</dbReference>
<dbReference type="PANTHER" id="PTHR42888:SF1">
    <property type="entry name" value="LARGE RIBOSOMAL SUBUNIT PROTEIN BL36C"/>
    <property type="match status" value="1"/>
</dbReference>
<dbReference type="Pfam" id="PF00444">
    <property type="entry name" value="Ribosomal_L36"/>
    <property type="match status" value="1"/>
</dbReference>
<dbReference type="SUPFAM" id="SSF57840">
    <property type="entry name" value="Ribosomal protein L36"/>
    <property type="match status" value="1"/>
</dbReference>
<dbReference type="PROSITE" id="PS00828">
    <property type="entry name" value="RIBOSOMAL_L36"/>
    <property type="match status" value="1"/>
</dbReference>
<accession>Q1D752</accession>